<sequence>MTQEVLERSIQVGGRTMTFQTGKIGKQAGGAIFCRYGDTVVSAFATGSAQPREGIDFFPLTVEFEERLYAAGKIPGGFIKREGRPSEKAILSARLIDRPIRPLFPEGYRNDVQVVAQVMSVDQDCASDITGINAASAALTISNVPFEGPVAAVTVGLIGDEFIINPTVEQSEKSVMHLTVAGTKDAVMMVEAGAQEVPEAQMLEAIMFGHREIQRIAEFIENYRLEALERNLAKPKQEVVMKQMPEEIVQAVKAFAYDKMDQAVRTEEKKAREEAIRQVKEEALAHFAEQYPEDSKTIDKILEDFVHKIVRRLITVEHIRPDGRALDEIRPISVEVGILPRTHGTGLFTRGQTQVLTVATLGAVGDEQILDGLGLEESKRYMHHYNFPPYSVGETRPMRGPGRREIGHGALAERALLPVIPDENDFPYTIRLVSEVLESNGSSSMASVCGSTLSLMDAGVPVKSPVAGIAMGLISEENHIAILSDIQGMEDHDGDMDFKVAGTSQGVTALQMDIKIKGVSREILERALTQAKEGRLFILDKMLSVIEKPRPELSPFAPRIITASIHPDKIREVIGPGGKTIKKIIDETGVKIDIEDDGRVFISAVDGEAGENALKIIQALTQEVEVGRIYNGRVTRIMDFGAFVEVIPGVLGLSGKEGLVHISQLAHGRVEKVEDVVKLGDDILVKATGIDKQGRLNLSRKEALPNPNPSSNPNPNGITANRNPRNS</sequence>
<name>PNP_DESHY</name>
<comment type="function">
    <text evidence="1">Involved in mRNA degradation. Catalyzes the phosphorolysis of single-stranded polyribonucleotides processively in the 3'- to 5'-direction.</text>
</comment>
<comment type="catalytic activity">
    <reaction evidence="1">
        <text>RNA(n+1) + phosphate = RNA(n) + a ribonucleoside 5'-diphosphate</text>
        <dbReference type="Rhea" id="RHEA:22096"/>
        <dbReference type="Rhea" id="RHEA-COMP:14527"/>
        <dbReference type="Rhea" id="RHEA-COMP:17342"/>
        <dbReference type="ChEBI" id="CHEBI:43474"/>
        <dbReference type="ChEBI" id="CHEBI:57930"/>
        <dbReference type="ChEBI" id="CHEBI:140395"/>
        <dbReference type="EC" id="2.7.7.8"/>
    </reaction>
</comment>
<comment type="cofactor">
    <cofactor evidence="1">
        <name>Mg(2+)</name>
        <dbReference type="ChEBI" id="CHEBI:18420"/>
    </cofactor>
</comment>
<comment type="subcellular location">
    <subcellularLocation>
        <location evidence="1">Cytoplasm</location>
    </subcellularLocation>
</comment>
<comment type="similarity">
    <text evidence="1">Belongs to the polyribonucleotide nucleotidyltransferase family.</text>
</comment>
<organism>
    <name type="scientific">Desulfitobacterium hafniense (strain Y51)</name>
    <dbReference type="NCBI Taxonomy" id="138119"/>
    <lineage>
        <taxon>Bacteria</taxon>
        <taxon>Bacillati</taxon>
        <taxon>Bacillota</taxon>
        <taxon>Clostridia</taxon>
        <taxon>Eubacteriales</taxon>
        <taxon>Desulfitobacteriaceae</taxon>
        <taxon>Desulfitobacterium</taxon>
    </lineage>
</organism>
<keyword id="KW-0963">Cytoplasm</keyword>
<keyword id="KW-0460">Magnesium</keyword>
<keyword id="KW-0479">Metal-binding</keyword>
<keyword id="KW-0548">Nucleotidyltransferase</keyword>
<keyword id="KW-1185">Reference proteome</keyword>
<keyword id="KW-0694">RNA-binding</keyword>
<keyword id="KW-0808">Transferase</keyword>
<protein>
    <recommendedName>
        <fullName evidence="1">Polyribonucleotide nucleotidyltransferase</fullName>
        <ecNumber evidence="1">2.7.7.8</ecNumber>
    </recommendedName>
    <alternativeName>
        <fullName evidence="1">Polynucleotide phosphorylase</fullName>
        <shortName evidence="1">PNPase</shortName>
    </alternativeName>
</protein>
<evidence type="ECO:0000255" key="1">
    <source>
        <dbReference type="HAMAP-Rule" id="MF_01595"/>
    </source>
</evidence>
<evidence type="ECO:0000256" key="2">
    <source>
        <dbReference type="SAM" id="MobiDB-lite"/>
    </source>
</evidence>
<dbReference type="EC" id="2.7.7.8" evidence="1"/>
<dbReference type="EMBL" id="AP008230">
    <property type="protein sequence ID" value="BAE84298.1"/>
    <property type="molecule type" value="Genomic_DNA"/>
</dbReference>
<dbReference type="RefSeq" id="WP_011460388.1">
    <property type="nucleotide sequence ID" value="NC_007907.1"/>
</dbReference>
<dbReference type="SMR" id="Q24UJ4"/>
<dbReference type="STRING" id="138119.DSY2509"/>
<dbReference type="KEGG" id="dsy:DSY2509"/>
<dbReference type="eggNOG" id="COG1185">
    <property type="taxonomic scope" value="Bacteria"/>
</dbReference>
<dbReference type="HOGENOM" id="CLU_004217_2_2_9"/>
<dbReference type="Proteomes" id="UP000001946">
    <property type="component" value="Chromosome"/>
</dbReference>
<dbReference type="GO" id="GO:0005829">
    <property type="term" value="C:cytosol"/>
    <property type="evidence" value="ECO:0007669"/>
    <property type="project" value="TreeGrafter"/>
</dbReference>
<dbReference type="GO" id="GO:0000175">
    <property type="term" value="F:3'-5'-RNA exonuclease activity"/>
    <property type="evidence" value="ECO:0007669"/>
    <property type="project" value="TreeGrafter"/>
</dbReference>
<dbReference type="GO" id="GO:0000287">
    <property type="term" value="F:magnesium ion binding"/>
    <property type="evidence" value="ECO:0007669"/>
    <property type="project" value="UniProtKB-UniRule"/>
</dbReference>
<dbReference type="GO" id="GO:0004654">
    <property type="term" value="F:polyribonucleotide nucleotidyltransferase activity"/>
    <property type="evidence" value="ECO:0007669"/>
    <property type="project" value="UniProtKB-UniRule"/>
</dbReference>
<dbReference type="GO" id="GO:0003723">
    <property type="term" value="F:RNA binding"/>
    <property type="evidence" value="ECO:0007669"/>
    <property type="project" value="UniProtKB-UniRule"/>
</dbReference>
<dbReference type="GO" id="GO:0006402">
    <property type="term" value="P:mRNA catabolic process"/>
    <property type="evidence" value="ECO:0007669"/>
    <property type="project" value="UniProtKB-UniRule"/>
</dbReference>
<dbReference type="GO" id="GO:0006396">
    <property type="term" value="P:RNA processing"/>
    <property type="evidence" value="ECO:0007669"/>
    <property type="project" value="InterPro"/>
</dbReference>
<dbReference type="CDD" id="cd02393">
    <property type="entry name" value="KH-I_PNPase"/>
    <property type="match status" value="1"/>
</dbReference>
<dbReference type="CDD" id="cd11363">
    <property type="entry name" value="RNase_PH_PNPase_1"/>
    <property type="match status" value="1"/>
</dbReference>
<dbReference type="CDD" id="cd11364">
    <property type="entry name" value="RNase_PH_PNPase_2"/>
    <property type="match status" value="1"/>
</dbReference>
<dbReference type="CDD" id="cd04472">
    <property type="entry name" value="S1_PNPase"/>
    <property type="match status" value="1"/>
</dbReference>
<dbReference type="FunFam" id="2.40.50.140:FF:000023">
    <property type="entry name" value="Polyribonucleotide nucleotidyltransferase"/>
    <property type="match status" value="1"/>
</dbReference>
<dbReference type="FunFam" id="3.30.1370.10:FF:000001">
    <property type="entry name" value="Polyribonucleotide nucleotidyltransferase"/>
    <property type="match status" value="1"/>
</dbReference>
<dbReference type="FunFam" id="3.30.230.70:FF:000001">
    <property type="entry name" value="Polyribonucleotide nucleotidyltransferase"/>
    <property type="match status" value="1"/>
</dbReference>
<dbReference type="FunFam" id="3.30.230.70:FF:000002">
    <property type="entry name" value="Polyribonucleotide nucleotidyltransferase"/>
    <property type="match status" value="1"/>
</dbReference>
<dbReference type="Gene3D" id="3.30.230.70">
    <property type="entry name" value="GHMP Kinase, N-terminal domain"/>
    <property type="match status" value="2"/>
</dbReference>
<dbReference type="Gene3D" id="3.30.1370.10">
    <property type="entry name" value="K Homology domain, type 1"/>
    <property type="match status" value="1"/>
</dbReference>
<dbReference type="Gene3D" id="2.40.50.140">
    <property type="entry name" value="Nucleic acid-binding proteins"/>
    <property type="match status" value="1"/>
</dbReference>
<dbReference type="HAMAP" id="MF_01595">
    <property type="entry name" value="PNPase"/>
    <property type="match status" value="1"/>
</dbReference>
<dbReference type="InterPro" id="IPR001247">
    <property type="entry name" value="ExoRNase_PH_dom1"/>
</dbReference>
<dbReference type="InterPro" id="IPR015847">
    <property type="entry name" value="ExoRNase_PH_dom2"/>
</dbReference>
<dbReference type="InterPro" id="IPR036345">
    <property type="entry name" value="ExoRNase_PH_dom2_sf"/>
</dbReference>
<dbReference type="InterPro" id="IPR004087">
    <property type="entry name" value="KH_dom"/>
</dbReference>
<dbReference type="InterPro" id="IPR004088">
    <property type="entry name" value="KH_dom_type_1"/>
</dbReference>
<dbReference type="InterPro" id="IPR036612">
    <property type="entry name" value="KH_dom_type_1_sf"/>
</dbReference>
<dbReference type="InterPro" id="IPR012340">
    <property type="entry name" value="NA-bd_OB-fold"/>
</dbReference>
<dbReference type="InterPro" id="IPR012162">
    <property type="entry name" value="PNPase"/>
</dbReference>
<dbReference type="InterPro" id="IPR027408">
    <property type="entry name" value="PNPase/RNase_PH_dom_sf"/>
</dbReference>
<dbReference type="InterPro" id="IPR015848">
    <property type="entry name" value="PNPase_PH_RNA-bd_bac/org-type"/>
</dbReference>
<dbReference type="InterPro" id="IPR036456">
    <property type="entry name" value="PNPase_PH_RNA-bd_sf"/>
</dbReference>
<dbReference type="InterPro" id="IPR020568">
    <property type="entry name" value="Ribosomal_Su5_D2-typ_SF"/>
</dbReference>
<dbReference type="InterPro" id="IPR003029">
    <property type="entry name" value="S1_domain"/>
</dbReference>
<dbReference type="NCBIfam" id="TIGR03591">
    <property type="entry name" value="polynuc_phos"/>
    <property type="match status" value="1"/>
</dbReference>
<dbReference type="NCBIfam" id="NF008805">
    <property type="entry name" value="PRK11824.1"/>
    <property type="match status" value="1"/>
</dbReference>
<dbReference type="PANTHER" id="PTHR11252">
    <property type="entry name" value="POLYRIBONUCLEOTIDE NUCLEOTIDYLTRANSFERASE"/>
    <property type="match status" value="1"/>
</dbReference>
<dbReference type="PANTHER" id="PTHR11252:SF0">
    <property type="entry name" value="POLYRIBONUCLEOTIDE NUCLEOTIDYLTRANSFERASE 1, MITOCHONDRIAL"/>
    <property type="match status" value="1"/>
</dbReference>
<dbReference type="Pfam" id="PF00013">
    <property type="entry name" value="KH_1"/>
    <property type="match status" value="1"/>
</dbReference>
<dbReference type="Pfam" id="PF03726">
    <property type="entry name" value="PNPase"/>
    <property type="match status" value="1"/>
</dbReference>
<dbReference type="Pfam" id="PF01138">
    <property type="entry name" value="RNase_PH"/>
    <property type="match status" value="2"/>
</dbReference>
<dbReference type="Pfam" id="PF03725">
    <property type="entry name" value="RNase_PH_C"/>
    <property type="match status" value="2"/>
</dbReference>
<dbReference type="Pfam" id="PF00575">
    <property type="entry name" value="S1"/>
    <property type="match status" value="1"/>
</dbReference>
<dbReference type="PIRSF" id="PIRSF005499">
    <property type="entry name" value="PNPase"/>
    <property type="match status" value="1"/>
</dbReference>
<dbReference type="SMART" id="SM00322">
    <property type="entry name" value="KH"/>
    <property type="match status" value="1"/>
</dbReference>
<dbReference type="SMART" id="SM00316">
    <property type="entry name" value="S1"/>
    <property type="match status" value="1"/>
</dbReference>
<dbReference type="SUPFAM" id="SSF54791">
    <property type="entry name" value="Eukaryotic type KH-domain (KH-domain type I)"/>
    <property type="match status" value="1"/>
</dbReference>
<dbReference type="SUPFAM" id="SSF50249">
    <property type="entry name" value="Nucleic acid-binding proteins"/>
    <property type="match status" value="1"/>
</dbReference>
<dbReference type="SUPFAM" id="SSF46915">
    <property type="entry name" value="Polynucleotide phosphorylase/guanosine pentaphosphate synthase (PNPase/GPSI), domain 3"/>
    <property type="match status" value="1"/>
</dbReference>
<dbReference type="SUPFAM" id="SSF55666">
    <property type="entry name" value="Ribonuclease PH domain 2-like"/>
    <property type="match status" value="2"/>
</dbReference>
<dbReference type="SUPFAM" id="SSF54211">
    <property type="entry name" value="Ribosomal protein S5 domain 2-like"/>
    <property type="match status" value="2"/>
</dbReference>
<dbReference type="PROSITE" id="PS50084">
    <property type="entry name" value="KH_TYPE_1"/>
    <property type="match status" value="1"/>
</dbReference>
<dbReference type="PROSITE" id="PS50126">
    <property type="entry name" value="S1"/>
    <property type="match status" value="1"/>
</dbReference>
<feature type="chain" id="PRO_0000329622" description="Polyribonucleotide nucleotidyltransferase">
    <location>
        <begin position="1"/>
        <end position="727"/>
    </location>
</feature>
<feature type="domain" description="KH" evidence="1">
    <location>
        <begin position="558"/>
        <end position="617"/>
    </location>
</feature>
<feature type="domain" description="S1 motif" evidence="1">
    <location>
        <begin position="627"/>
        <end position="701"/>
    </location>
</feature>
<feature type="region of interest" description="Disordered" evidence="2">
    <location>
        <begin position="698"/>
        <end position="727"/>
    </location>
</feature>
<feature type="compositionally biased region" description="Polar residues" evidence="2">
    <location>
        <begin position="717"/>
        <end position="727"/>
    </location>
</feature>
<feature type="binding site" evidence="1">
    <location>
        <position position="491"/>
    </location>
    <ligand>
        <name>Mg(2+)</name>
        <dbReference type="ChEBI" id="CHEBI:18420"/>
    </ligand>
</feature>
<feature type="binding site" evidence="1">
    <location>
        <position position="497"/>
    </location>
    <ligand>
        <name>Mg(2+)</name>
        <dbReference type="ChEBI" id="CHEBI:18420"/>
    </ligand>
</feature>
<gene>
    <name evidence="1" type="primary">pnp</name>
    <name type="ordered locus">DSY2509</name>
</gene>
<reference key="1">
    <citation type="journal article" date="2006" name="J. Bacteriol.">
        <title>Complete genome sequence of the dehalorespiring bacterium Desulfitobacterium hafniense Y51 and comparison with Dehalococcoides ethenogenes 195.</title>
        <authorList>
            <person name="Nonaka H."/>
            <person name="Keresztes G."/>
            <person name="Shinoda Y."/>
            <person name="Ikenaga Y."/>
            <person name="Abe M."/>
            <person name="Naito K."/>
            <person name="Inatomi K."/>
            <person name="Furukawa K."/>
            <person name="Inui M."/>
            <person name="Yukawa H."/>
        </authorList>
    </citation>
    <scope>NUCLEOTIDE SEQUENCE [LARGE SCALE GENOMIC DNA]</scope>
    <source>
        <strain>Y51</strain>
    </source>
</reference>
<accession>Q24UJ4</accession>
<proteinExistence type="inferred from homology"/>